<accession>Q0P670</accession>
<organism>
    <name type="scientific">Homo sapiens</name>
    <name type="common">Human</name>
    <dbReference type="NCBI Taxonomy" id="9606"/>
    <lineage>
        <taxon>Eukaryota</taxon>
        <taxon>Metazoa</taxon>
        <taxon>Chordata</taxon>
        <taxon>Craniata</taxon>
        <taxon>Vertebrata</taxon>
        <taxon>Euteleostomi</taxon>
        <taxon>Mammalia</taxon>
        <taxon>Eutheria</taxon>
        <taxon>Euarchontoglires</taxon>
        <taxon>Primates</taxon>
        <taxon>Haplorrhini</taxon>
        <taxon>Catarrhini</taxon>
        <taxon>Hominidae</taxon>
        <taxon>Homo</taxon>
    </lineage>
</organism>
<comment type="subcellular location">
    <subcellularLocation>
        <location evidence="3">Membrane</location>
        <topology evidence="3">Single-pass membrane protein</topology>
    </subcellularLocation>
</comment>
<keyword id="KW-0472">Membrane</keyword>
<keyword id="KW-1267">Proteomics identification</keyword>
<keyword id="KW-1185">Reference proteome</keyword>
<keyword id="KW-0812">Transmembrane</keyword>
<keyword id="KW-1133">Transmembrane helix</keyword>
<sequence length="501" mass="57131">MENQLWHNTVRCCNQYQESPHDAEDILLLLLGLIVLVNIGINVATMMWHGLQNALDKMIDWATQKNEIQASESPPSGPPDKAQDVHIHCILDPVQVKMSRPTQYSSFSCHHFSNHHSSSLLRCVRRRRRRHRRCRRRCCNHQQRPQNYRQIPHSHSVFRNPHRSQKMSQLHRVPFFDQEDPDSYLEEEDNLPFPYPKYPRRGWGGFYQRAGLPSNVGLWGHQGGILASLPPPSLYLSPELRCMPKRVEARSELRLQSYGRHGSQSRLWGNVEAEQWASSPPPPHRLPPNPSWVPVGHSPYPSVGWMLYDSWDQRRRGTEGFERPPASVSRNARPEAQGCREHHSPQSHQQSLLGHAYGQSHRSPHPSTEPLGYSSQDPREVRRRAADWAEALPAWRPLTTSASLTVLDEASHQRTPAPSSVLVPHSSQPWPKVQAADPAPPPTMFVPLSRNPGGNANYQVYDSLELKRQVQKSRARSSSLPPASTSTLRPSLHRSQTEKLN</sequence>
<dbReference type="EMBL" id="AC113189">
    <property type="status" value="NOT_ANNOTATED_CDS"/>
    <property type="molecule type" value="Genomic_DNA"/>
</dbReference>
<dbReference type="EMBL" id="BC031286">
    <property type="status" value="NOT_ANNOTATED_CDS"/>
    <property type="molecule type" value="mRNA"/>
</dbReference>
<dbReference type="CCDS" id="CCDS42255.1"/>
<dbReference type="RefSeq" id="NP_783861.3">
    <property type="nucleotide sequence ID" value="NM_175734.5"/>
</dbReference>
<dbReference type="SMR" id="Q0P670"/>
<dbReference type="STRING" id="9606.ENSP00000328061"/>
<dbReference type="iPTMnet" id="Q0P670"/>
<dbReference type="PhosphoSitePlus" id="Q0P670"/>
<dbReference type="BioMuta" id="SPEM2"/>
<dbReference type="DMDM" id="261260060"/>
<dbReference type="MassIVE" id="Q0P670"/>
<dbReference type="PaxDb" id="9606-ENSP00000328061"/>
<dbReference type="PeptideAtlas" id="Q0P670"/>
<dbReference type="ProteomicsDB" id="58775"/>
<dbReference type="Antibodypedia" id="6127">
    <property type="antibodies" value="60 antibodies from 15 providers"/>
</dbReference>
<dbReference type="DNASU" id="201243"/>
<dbReference type="Ensembl" id="ENST00000333870.8">
    <property type="protein sequence ID" value="ENSP00000328061.3"/>
    <property type="gene ID" value="ENSG00000184560.8"/>
</dbReference>
<dbReference type="Ensembl" id="ENST00000639609.2">
    <property type="protein sequence ID" value="ENSP00000492107.1"/>
    <property type="gene ID" value="ENSG00000283714.2"/>
</dbReference>
<dbReference type="GeneID" id="201243"/>
<dbReference type="KEGG" id="hsa:201243"/>
<dbReference type="MANE-Select" id="ENST00000333870.8">
    <property type="protein sequence ID" value="ENSP00000328061.3"/>
    <property type="RefSeq nucleotide sequence ID" value="NM_175734.5"/>
    <property type="RefSeq protein sequence ID" value="NP_783861.3"/>
</dbReference>
<dbReference type="UCSC" id="uc002ggw.4">
    <property type="organism name" value="human"/>
</dbReference>
<dbReference type="AGR" id="HGNC:27315"/>
<dbReference type="CTD" id="201243"/>
<dbReference type="GeneCards" id="SPEM2"/>
<dbReference type="HGNC" id="HGNC:27315">
    <property type="gene designation" value="SPEM2"/>
</dbReference>
<dbReference type="HPA" id="ENSG00000184560">
    <property type="expression patterns" value="Tissue enriched (testis)"/>
</dbReference>
<dbReference type="neXtProt" id="NX_Q0P670"/>
<dbReference type="OpenTargets" id="ENSG00000184560"/>
<dbReference type="PharmGKB" id="PA142672222"/>
<dbReference type="VEuPathDB" id="HostDB:ENSG00000184560"/>
<dbReference type="eggNOG" id="ENOG502RKNT">
    <property type="taxonomic scope" value="Eukaryota"/>
</dbReference>
<dbReference type="GeneTree" id="ENSGT00510000049558"/>
<dbReference type="HOGENOM" id="CLU_045547_0_0_1"/>
<dbReference type="InParanoid" id="Q0P670"/>
<dbReference type="OMA" id="DVHIHCT"/>
<dbReference type="OrthoDB" id="9450448at2759"/>
<dbReference type="PAN-GO" id="Q0P670">
    <property type="GO annotations" value="0 GO annotations based on evolutionary models"/>
</dbReference>
<dbReference type="PhylomeDB" id="Q0P670"/>
<dbReference type="TreeFam" id="TF337389"/>
<dbReference type="PathwayCommons" id="Q0P670"/>
<dbReference type="SignaLink" id="Q0P670"/>
<dbReference type="BioGRID-ORCS" id="201243">
    <property type="hits" value="7 hits in 1132 CRISPR screens"/>
</dbReference>
<dbReference type="GenomeRNAi" id="201243"/>
<dbReference type="Pharos" id="Q0P670">
    <property type="development level" value="Tdark"/>
</dbReference>
<dbReference type="PRO" id="PR:Q0P670"/>
<dbReference type="Proteomes" id="UP000005640">
    <property type="component" value="Chromosome 17"/>
</dbReference>
<dbReference type="RNAct" id="Q0P670">
    <property type="molecule type" value="protein"/>
</dbReference>
<dbReference type="Bgee" id="ENSG00000184560">
    <property type="expression patterns" value="Expressed in left testis and 18 other cell types or tissues"/>
</dbReference>
<dbReference type="ExpressionAtlas" id="Q0P670">
    <property type="expression patterns" value="baseline and differential"/>
</dbReference>
<dbReference type="GO" id="GO:0016020">
    <property type="term" value="C:membrane"/>
    <property type="evidence" value="ECO:0007669"/>
    <property type="project" value="UniProtKB-SubCell"/>
</dbReference>
<dbReference type="InterPro" id="IPR031368">
    <property type="entry name" value="SPEM1_N"/>
</dbReference>
<dbReference type="PANTHER" id="PTHR34834:SF2">
    <property type="entry name" value="SPEM FAMILY MEMBER 2"/>
    <property type="match status" value="1"/>
</dbReference>
<dbReference type="PANTHER" id="PTHR34834">
    <property type="entry name" value="SPERMATID MATURATION PROTEIN 1"/>
    <property type="match status" value="1"/>
</dbReference>
<dbReference type="Pfam" id="PF15670">
    <property type="entry name" value="Spem1"/>
    <property type="match status" value="1"/>
</dbReference>
<gene>
    <name evidence="4" type="primary">SPEM2</name>
    <name type="synonym">C17orf74</name>
</gene>
<feature type="chain" id="PRO_0000286623" description="Uncharacterized protein SPEM2">
    <location>
        <begin position="1"/>
        <end position="501"/>
    </location>
</feature>
<feature type="transmembrane region" description="Helical" evidence="1">
    <location>
        <begin position="26"/>
        <end position="46"/>
    </location>
</feature>
<feature type="region of interest" description="Disordered" evidence="2">
    <location>
        <begin position="316"/>
        <end position="384"/>
    </location>
</feature>
<feature type="region of interest" description="Disordered" evidence="2">
    <location>
        <begin position="409"/>
        <end position="501"/>
    </location>
</feature>
<feature type="compositionally biased region" description="Low complexity" evidence="2">
    <location>
        <begin position="476"/>
        <end position="490"/>
    </location>
</feature>
<feature type="sequence variant" id="VAR_032145" description="In dbSNP:rs13290.">
    <original>S</original>
    <variation>A</variation>
    <location>
        <position position="108"/>
    </location>
</feature>
<feature type="sequence variant" id="VAR_032146" description="In dbSNP:rs3892554.">
    <original>Q</original>
    <variation>R</variation>
    <location>
        <position position="376"/>
    </location>
</feature>
<feature type="sequence conflict" description="In Ref. 2; BC031286." evidence="3" ref="2">
    <location>
        <position position="409"/>
    </location>
</feature>
<protein>
    <recommendedName>
        <fullName>Uncharacterized protein SPEM2</fullName>
    </recommendedName>
</protein>
<reference key="1">
    <citation type="journal article" date="2006" name="Nature">
        <title>DNA sequence of human chromosome 17 and analysis of rearrangement in the human lineage.</title>
        <authorList>
            <person name="Zody M.C."/>
            <person name="Garber M."/>
            <person name="Adams D.J."/>
            <person name="Sharpe T."/>
            <person name="Harrow J."/>
            <person name="Lupski J.R."/>
            <person name="Nicholson C."/>
            <person name="Searle S.M."/>
            <person name="Wilming L."/>
            <person name="Young S.K."/>
            <person name="Abouelleil A."/>
            <person name="Allen N.R."/>
            <person name="Bi W."/>
            <person name="Bloom T."/>
            <person name="Borowsky M.L."/>
            <person name="Bugalter B.E."/>
            <person name="Butler J."/>
            <person name="Chang J.L."/>
            <person name="Chen C.-K."/>
            <person name="Cook A."/>
            <person name="Corum B."/>
            <person name="Cuomo C.A."/>
            <person name="de Jong P.J."/>
            <person name="DeCaprio D."/>
            <person name="Dewar K."/>
            <person name="FitzGerald M."/>
            <person name="Gilbert J."/>
            <person name="Gibson R."/>
            <person name="Gnerre S."/>
            <person name="Goldstein S."/>
            <person name="Grafham D.V."/>
            <person name="Grocock R."/>
            <person name="Hafez N."/>
            <person name="Hagopian D.S."/>
            <person name="Hart E."/>
            <person name="Norman C.H."/>
            <person name="Humphray S."/>
            <person name="Jaffe D.B."/>
            <person name="Jones M."/>
            <person name="Kamal M."/>
            <person name="Khodiyar V.K."/>
            <person name="LaButti K."/>
            <person name="Laird G."/>
            <person name="Lehoczky J."/>
            <person name="Liu X."/>
            <person name="Lokyitsang T."/>
            <person name="Loveland J."/>
            <person name="Lui A."/>
            <person name="Macdonald P."/>
            <person name="Major J.E."/>
            <person name="Matthews L."/>
            <person name="Mauceli E."/>
            <person name="McCarroll S.A."/>
            <person name="Mihalev A.H."/>
            <person name="Mudge J."/>
            <person name="Nguyen C."/>
            <person name="Nicol R."/>
            <person name="O'Leary S.B."/>
            <person name="Osoegawa K."/>
            <person name="Schwartz D.C."/>
            <person name="Shaw-Smith C."/>
            <person name="Stankiewicz P."/>
            <person name="Steward C."/>
            <person name="Swarbreck D."/>
            <person name="Venkataraman V."/>
            <person name="Whittaker C.A."/>
            <person name="Yang X."/>
            <person name="Zimmer A.R."/>
            <person name="Bradley A."/>
            <person name="Hubbard T."/>
            <person name="Birren B.W."/>
            <person name="Rogers J."/>
            <person name="Lander E.S."/>
            <person name="Nusbaum C."/>
        </authorList>
    </citation>
    <scope>NUCLEOTIDE SEQUENCE [LARGE SCALE GENOMIC DNA]</scope>
</reference>
<reference key="2">
    <citation type="journal article" date="2004" name="Genome Res.">
        <title>The status, quality, and expansion of the NIH full-length cDNA project: the Mammalian Gene Collection (MGC).</title>
        <authorList>
            <consortium name="The MGC Project Team"/>
        </authorList>
    </citation>
    <scope>NUCLEOTIDE SEQUENCE [LARGE SCALE MRNA]</scope>
    <source>
        <tissue>Testis</tissue>
    </source>
</reference>
<name>SPEM2_HUMAN</name>
<evidence type="ECO:0000255" key="1"/>
<evidence type="ECO:0000256" key="2">
    <source>
        <dbReference type="SAM" id="MobiDB-lite"/>
    </source>
</evidence>
<evidence type="ECO:0000305" key="3"/>
<evidence type="ECO:0000312" key="4">
    <source>
        <dbReference type="HGNC" id="HGNC:27315"/>
    </source>
</evidence>
<proteinExistence type="evidence at protein level"/>